<reference key="1">
    <citation type="submission" date="2004-06" db="EMBL/GenBank/DDBJ databases">
        <authorList>
            <consortium name="NIH - Xenopus Gene Collection (XGC) project"/>
        </authorList>
    </citation>
    <scope>NUCLEOTIDE SEQUENCE [LARGE SCALE MRNA]</scope>
    <source>
        <tissue>Embryo</tissue>
    </source>
</reference>
<reference key="2">
    <citation type="journal article" date="2011" name="Biochem. J.">
        <title>Disrupted in renal carcinoma 2 (DIRC2), a novel transporter of the lysosomal membrane, is proteolytically processed by cathepsin L.</title>
        <authorList>
            <person name="Savalas L.R."/>
            <person name="Gasnier B."/>
            <person name="Damme M."/>
            <person name="Lubke T."/>
            <person name="Wrocklage C."/>
            <person name="Debacker C."/>
            <person name="Jezegou A."/>
            <person name="Reinheckel T."/>
            <person name="Hasilik A."/>
            <person name="Saftig P."/>
            <person name="Schroder B."/>
        </authorList>
    </citation>
    <scope>SUBCELLULAR LOCATION</scope>
    <scope>FUNCTION</scope>
    <scope>TRANSPORTER ACTIVITY</scope>
</reference>
<proteinExistence type="evidence at transcript level"/>
<comment type="function">
    <text evidence="3">Mediates H(+)-dependent pyridoxine transport.</text>
</comment>
<comment type="catalytic activity">
    <reaction evidence="3">
        <text>pyridoxine(out) + n H(+)(out) = pyridoxine(in) + n H(+)(in)</text>
        <dbReference type="Rhea" id="RHEA:76203"/>
        <dbReference type="ChEBI" id="CHEBI:15378"/>
        <dbReference type="ChEBI" id="CHEBI:16709"/>
    </reaction>
</comment>
<comment type="subcellular location">
    <subcellularLocation>
        <location evidence="3">Lysosome membrane</location>
        <topology evidence="2">Multi-pass membrane protein</topology>
    </subcellularLocation>
</comment>
<comment type="similarity">
    <text evidence="4">Belongs to the major facilitator superfamily.</text>
</comment>
<feature type="chain" id="PRO_0000271341" description="Solute carrier family 49 member 4 homolog">
    <location>
        <begin position="1"/>
        <end position="456"/>
    </location>
</feature>
<feature type="topological domain" description="Cytoplasmic" evidence="2">
    <location>
        <begin position="1"/>
        <end position="29"/>
    </location>
</feature>
<feature type="transmembrane region" description="Helical" evidence="2">
    <location>
        <begin position="30"/>
        <end position="50"/>
    </location>
</feature>
<feature type="topological domain" description="Lumenal" evidence="2">
    <location>
        <begin position="51"/>
        <end position="67"/>
    </location>
</feature>
<feature type="transmembrane region" description="Helical" evidence="2">
    <location>
        <begin position="68"/>
        <end position="88"/>
    </location>
</feature>
<feature type="topological domain" description="Cytoplasmic" evidence="2">
    <location>
        <begin position="89"/>
        <end position="95"/>
    </location>
</feature>
<feature type="transmembrane region" description="Helical" evidence="2">
    <location>
        <begin position="96"/>
        <end position="116"/>
    </location>
</feature>
<feature type="topological domain" description="Lumenal" evidence="2">
    <location>
        <begin position="117"/>
        <end position="123"/>
    </location>
</feature>
<feature type="transmembrane region" description="Helical" evidence="2">
    <location>
        <begin position="124"/>
        <end position="144"/>
    </location>
</feature>
<feature type="topological domain" description="Cytoplasmic" evidence="2">
    <location>
        <begin position="145"/>
        <end position="162"/>
    </location>
</feature>
<feature type="transmembrane region" description="Helical" evidence="2">
    <location>
        <begin position="163"/>
        <end position="183"/>
    </location>
</feature>
<feature type="topological domain" description="Lumenal" evidence="2">
    <location>
        <begin position="184"/>
        <end position="207"/>
    </location>
</feature>
<feature type="transmembrane region" description="Helical" evidence="2">
    <location>
        <begin position="208"/>
        <end position="228"/>
    </location>
</feature>
<feature type="topological domain" description="Cytoplasmic" evidence="2">
    <location>
        <begin position="229"/>
        <end position="259"/>
    </location>
</feature>
<feature type="transmembrane region" description="Helical" evidence="2">
    <location>
        <begin position="260"/>
        <end position="280"/>
    </location>
</feature>
<feature type="topological domain" description="Lumenal" evidence="2">
    <location>
        <begin position="281"/>
        <end position="292"/>
    </location>
</feature>
<feature type="transmembrane region" description="Helical" evidence="2">
    <location>
        <begin position="293"/>
        <end position="313"/>
    </location>
</feature>
<feature type="topological domain" description="Cytoplasmic" evidence="2">
    <location>
        <begin position="314"/>
        <end position="326"/>
    </location>
</feature>
<feature type="transmembrane region" description="Helical" evidence="2">
    <location>
        <begin position="327"/>
        <end position="347"/>
    </location>
</feature>
<feature type="topological domain" description="Lumenal" evidence="2">
    <location>
        <begin position="348"/>
        <end position="362"/>
    </location>
</feature>
<feature type="transmembrane region" description="Helical" evidence="2">
    <location>
        <begin position="363"/>
        <end position="383"/>
    </location>
</feature>
<feature type="topological domain" description="Cytoplasmic" evidence="2">
    <location>
        <begin position="384"/>
        <end position="392"/>
    </location>
</feature>
<feature type="transmembrane region" description="Helical" evidence="2">
    <location>
        <begin position="393"/>
        <end position="413"/>
    </location>
</feature>
<feature type="topological domain" description="Lumenal" evidence="2">
    <location>
        <begin position="414"/>
        <end position="420"/>
    </location>
</feature>
<feature type="transmembrane region" description="Helical" evidence="2">
    <location>
        <begin position="421"/>
        <end position="441"/>
    </location>
</feature>
<feature type="topological domain" description="Cytoplasmic" evidence="2">
    <location>
        <begin position="442"/>
        <end position="456"/>
    </location>
</feature>
<feature type="short sequence motif" description="Di-leucine motif; mediates lysosomal localization" evidence="1">
    <location>
        <begin position="14"/>
        <end position="15"/>
    </location>
</feature>
<feature type="glycosylation site" description="N-linked (GlcNAc...) asparagine" evidence="2">
    <location>
        <position position="187"/>
    </location>
</feature>
<feature type="glycosylation site" description="N-linked (GlcNAc...) asparagine" evidence="2">
    <location>
        <position position="349"/>
    </location>
</feature>
<gene>
    <name type="primary">slc49a4</name>
    <name type="synonym">dirc2</name>
</gene>
<dbReference type="EMBL" id="BC073394">
    <property type="protein sequence ID" value="AAH73394.1"/>
    <property type="molecule type" value="mRNA"/>
</dbReference>
<dbReference type="RefSeq" id="NP_001085824.1">
    <property type="nucleotide sequence ID" value="NM_001092355.1"/>
</dbReference>
<dbReference type="SMR" id="Q6GNV7"/>
<dbReference type="GlyCosmos" id="Q6GNV7">
    <property type="glycosylation" value="2 sites, No reported glycans"/>
</dbReference>
<dbReference type="DNASU" id="444251"/>
<dbReference type="GeneID" id="444251"/>
<dbReference type="KEGG" id="xla:444251"/>
<dbReference type="AGR" id="Xenbase:XB-GENE-865779"/>
<dbReference type="CTD" id="444251"/>
<dbReference type="Xenbase" id="XB-GENE-865779">
    <property type="gene designation" value="slc49a4.L"/>
</dbReference>
<dbReference type="OMA" id="VGCWIRW"/>
<dbReference type="OrthoDB" id="422206at2759"/>
<dbReference type="Proteomes" id="UP000186698">
    <property type="component" value="Chromosome 9_10L"/>
</dbReference>
<dbReference type="Bgee" id="444251">
    <property type="expression patterns" value="Expressed in egg cell and 19 other cell types or tissues"/>
</dbReference>
<dbReference type="GO" id="GO:0043231">
    <property type="term" value="C:intracellular membrane-bounded organelle"/>
    <property type="evidence" value="ECO:0000318"/>
    <property type="project" value="GO_Central"/>
</dbReference>
<dbReference type="GO" id="GO:0005765">
    <property type="term" value="C:lysosomal membrane"/>
    <property type="evidence" value="ECO:0000250"/>
    <property type="project" value="UniProtKB"/>
</dbReference>
<dbReference type="GO" id="GO:0016020">
    <property type="term" value="C:membrane"/>
    <property type="evidence" value="ECO:0000318"/>
    <property type="project" value="GO_Central"/>
</dbReference>
<dbReference type="GO" id="GO:0022857">
    <property type="term" value="F:transmembrane transporter activity"/>
    <property type="evidence" value="ECO:0007669"/>
    <property type="project" value="InterPro"/>
</dbReference>
<dbReference type="GO" id="GO:0031923">
    <property type="term" value="P:pyridoxine transport"/>
    <property type="evidence" value="ECO:0000250"/>
    <property type="project" value="UniProtKB"/>
</dbReference>
<dbReference type="CDD" id="cd17397">
    <property type="entry name" value="MFS_DIRC2"/>
    <property type="match status" value="1"/>
</dbReference>
<dbReference type="FunFam" id="1.20.1250.20:FF:000162">
    <property type="entry name" value="disrupted in renal carcinoma protein 2"/>
    <property type="match status" value="1"/>
</dbReference>
<dbReference type="Gene3D" id="1.20.1250.20">
    <property type="entry name" value="MFS general substrate transporter like domains"/>
    <property type="match status" value="1"/>
</dbReference>
<dbReference type="InterPro" id="IPR049680">
    <property type="entry name" value="FLVCR1-2_SLC49-like"/>
</dbReference>
<dbReference type="InterPro" id="IPR011701">
    <property type="entry name" value="MFS"/>
</dbReference>
<dbReference type="InterPro" id="IPR036259">
    <property type="entry name" value="MFS_trans_sf"/>
</dbReference>
<dbReference type="InterPro" id="IPR049604">
    <property type="entry name" value="SLC49A4-like"/>
</dbReference>
<dbReference type="PANTHER" id="PTHR10924">
    <property type="entry name" value="MAJOR FACILITATOR SUPERFAMILY PROTEIN-RELATED"/>
    <property type="match status" value="1"/>
</dbReference>
<dbReference type="PANTHER" id="PTHR10924:SF27">
    <property type="entry name" value="SOLUTE CARRIER FAMILY 49 MEMBER 4"/>
    <property type="match status" value="1"/>
</dbReference>
<dbReference type="Pfam" id="PF07690">
    <property type="entry name" value="MFS_1"/>
    <property type="match status" value="1"/>
</dbReference>
<dbReference type="SUPFAM" id="SSF103473">
    <property type="entry name" value="MFS general substrate transporter"/>
    <property type="match status" value="1"/>
</dbReference>
<keyword id="KW-0325">Glycoprotein</keyword>
<keyword id="KW-0458">Lysosome</keyword>
<keyword id="KW-0472">Membrane</keyword>
<keyword id="KW-1185">Reference proteome</keyword>
<keyword id="KW-0812">Transmembrane</keyword>
<keyword id="KW-1133">Transmembrane helix</keyword>
<keyword id="KW-0813">Transport</keyword>
<protein>
    <recommendedName>
        <fullName evidence="4">Solute carrier family 49 member 4 homolog</fullName>
    </recommendedName>
    <alternativeName>
        <fullName>Disrupted in renal carcinoma protein 2 homolog</fullName>
    </alternativeName>
</protein>
<name>DIRC2_XENLA</name>
<organism>
    <name type="scientific">Xenopus laevis</name>
    <name type="common">African clawed frog</name>
    <dbReference type="NCBI Taxonomy" id="8355"/>
    <lineage>
        <taxon>Eukaryota</taxon>
        <taxon>Metazoa</taxon>
        <taxon>Chordata</taxon>
        <taxon>Craniata</taxon>
        <taxon>Vertebrata</taxon>
        <taxon>Euteleostomi</taxon>
        <taxon>Amphibia</taxon>
        <taxon>Batrachia</taxon>
        <taxon>Anura</taxon>
        <taxon>Pipoidea</taxon>
        <taxon>Pipidae</taxon>
        <taxon>Xenopodinae</taxon>
        <taxon>Xenopus</taxon>
        <taxon>Xenopus</taxon>
    </lineage>
</organism>
<evidence type="ECO:0000250" key="1">
    <source>
        <dbReference type="UniProtKB" id="Q96SL1"/>
    </source>
</evidence>
<evidence type="ECO:0000255" key="2"/>
<evidence type="ECO:0000269" key="3">
    <source>
    </source>
</evidence>
<evidence type="ECO:0000305" key="4"/>
<sequence length="456" mass="49951">MGLEWSSPGERQPLLFPGGPRSPRVFGRRWLVLLLFSVLAFLQGLVWNSWGPIQISARTAYKFSGLDIALLVLWGPIGFLPCFLFMWLMDNRGLRITVLLTALLMVLGAGLRCVPVEDLAIRRILIHGGQLLNGFAGPTVMNAAPFLSTTWFAPDERATATAIASMLNYLGGACAFLVGPLVVPAPNSTSGLLLYSGSTDAIKDRIEAVMYAEFGIIFVVFAAILAYFPARPPVPPSVAAASRRLSYRTSIFRLLSNLRFLLIVLAYAIPLGFYSGWIGVLDLILTPVHVTQVDAGWVGFWSIVGGCVVGIAVGRFADSIRGVLKPILLLLFSGATLSATWFTLTFLSNVTHLPLTTATLYTSCILIGVFLNGTVPIFFELFVETVYPIPEGIACGVVTFLSNIFMGVLLVFLTMYQMELSWLNWCLTGSCFLSLFFIACFRESYDRLYLDVFVSV</sequence>
<accession>Q6GNV7</accession>